<accession>A1KM64</accession>
<evidence type="ECO:0000255" key="1">
    <source>
        <dbReference type="HAMAP-Rule" id="MF_00197"/>
    </source>
</evidence>
<organism>
    <name type="scientific">Mycobacterium bovis (strain BCG / Pasteur 1173P2)</name>
    <dbReference type="NCBI Taxonomy" id="410289"/>
    <lineage>
        <taxon>Bacteria</taxon>
        <taxon>Bacillati</taxon>
        <taxon>Actinomycetota</taxon>
        <taxon>Actinomycetes</taxon>
        <taxon>Mycobacteriales</taxon>
        <taxon>Mycobacteriaceae</taxon>
        <taxon>Mycobacterium</taxon>
        <taxon>Mycobacterium tuberculosis complex</taxon>
    </lineage>
</organism>
<dbReference type="EC" id="5.1.1.7" evidence="1"/>
<dbReference type="EMBL" id="AM408590">
    <property type="protein sequence ID" value="CAL72727.1"/>
    <property type="molecule type" value="Genomic_DNA"/>
</dbReference>
<dbReference type="RefSeq" id="WP_003413987.1">
    <property type="nucleotide sequence ID" value="NC_008769.1"/>
</dbReference>
<dbReference type="SMR" id="A1KM64"/>
<dbReference type="GeneID" id="45426713"/>
<dbReference type="KEGG" id="mbb:BCG_2739c"/>
<dbReference type="HOGENOM" id="CLU_053306_4_0_11"/>
<dbReference type="UniPathway" id="UPA00034">
    <property type="reaction ID" value="UER00025"/>
</dbReference>
<dbReference type="Proteomes" id="UP000001472">
    <property type="component" value="Chromosome"/>
</dbReference>
<dbReference type="GO" id="GO:0005829">
    <property type="term" value="C:cytosol"/>
    <property type="evidence" value="ECO:0007669"/>
    <property type="project" value="TreeGrafter"/>
</dbReference>
<dbReference type="GO" id="GO:0008837">
    <property type="term" value="F:diaminopimelate epimerase activity"/>
    <property type="evidence" value="ECO:0007669"/>
    <property type="project" value="UniProtKB-UniRule"/>
</dbReference>
<dbReference type="GO" id="GO:0009089">
    <property type="term" value="P:lysine biosynthetic process via diaminopimelate"/>
    <property type="evidence" value="ECO:0007669"/>
    <property type="project" value="UniProtKB-UniRule"/>
</dbReference>
<dbReference type="Gene3D" id="3.10.310.10">
    <property type="entry name" value="Diaminopimelate Epimerase, Chain A, domain 1"/>
    <property type="match status" value="2"/>
</dbReference>
<dbReference type="HAMAP" id="MF_00197">
    <property type="entry name" value="DAP_epimerase"/>
    <property type="match status" value="1"/>
</dbReference>
<dbReference type="InterPro" id="IPR018510">
    <property type="entry name" value="DAP_epimerase_AS"/>
</dbReference>
<dbReference type="InterPro" id="IPR001653">
    <property type="entry name" value="DAP_epimerase_DapF"/>
</dbReference>
<dbReference type="NCBIfam" id="TIGR00652">
    <property type="entry name" value="DapF"/>
    <property type="match status" value="1"/>
</dbReference>
<dbReference type="PANTHER" id="PTHR31689:SF0">
    <property type="entry name" value="DIAMINOPIMELATE EPIMERASE"/>
    <property type="match status" value="1"/>
</dbReference>
<dbReference type="PANTHER" id="PTHR31689">
    <property type="entry name" value="DIAMINOPIMELATE EPIMERASE, CHLOROPLASTIC"/>
    <property type="match status" value="1"/>
</dbReference>
<dbReference type="Pfam" id="PF01678">
    <property type="entry name" value="DAP_epimerase"/>
    <property type="match status" value="2"/>
</dbReference>
<dbReference type="SUPFAM" id="SSF54506">
    <property type="entry name" value="Diaminopimelate epimerase-like"/>
    <property type="match status" value="2"/>
</dbReference>
<dbReference type="PROSITE" id="PS01326">
    <property type="entry name" value="DAP_EPIMERASE"/>
    <property type="match status" value="1"/>
</dbReference>
<name>DAPF_MYCBP</name>
<sequence length="289" mass="29698">MIFAKGHGTQNDFVLLPDVDAELVLTAARVAALCDRRKGLGADGVLRVTTAGAAQAVGVLDSLPEGVRVTDWYMDYRNADGSAAQMCGNGVRVFAHYLRASGLEVRDEFVVGSLAGPRPVTCHHVEAAYADVSVDMGKANRLGAGEAVVGGRRFHGLAVDVGNPHLACVDSQLTVDGLAALDVGAPVSFDGAQFPDGVNVEVLTAPVDGAVWMRVHERGVGETRSCGTGTVAAAVAALAAVGSPTGTLTVHVPGGEVVVTVTDATSFLRGPSVLVARGDLADDWWNAMG</sequence>
<comment type="function">
    <text evidence="1">Catalyzes the stereoinversion of LL-2,6-diaminopimelate (L,L-DAP) to meso-diaminopimelate (meso-DAP), a precursor of L-lysine and an essential component of the bacterial peptidoglycan.</text>
</comment>
<comment type="catalytic activity">
    <reaction evidence="1">
        <text>(2S,6S)-2,6-diaminopimelate = meso-2,6-diaminopimelate</text>
        <dbReference type="Rhea" id="RHEA:15393"/>
        <dbReference type="ChEBI" id="CHEBI:57609"/>
        <dbReference type="ChEBI" id="CHEBI:57791"/>
        <dbReference type="EC" id="5.1.1.7"/>
    </reaction>
</comment>
<comment type="pathway">
    <text evidence="1">Amino-acid biosynthesis; L-lysine biosynthesis via DAP pathway; DL-2,6-diaminopimelate from LL-2,6-diaminopimelate: step 1/1.</text>
</comment>
<comment type="subunit">
    <text evidence="1">Homodimer.</text>
</comment>
<comment type="subcellular location">
    <subcellularLocation>
        <location evidence="1">Cytoplasm</location>
    </subcellularLocation>
</comment>
<comment type="similarity">
    <text evidence="1">Belongs to the diaminopimelate epimerase family.</text>
</comment>
<protein>
    <recommendedName>
        <fullName evidence="1">Diaminopimelate epimerase</fullName>
        <shortName evidence="1">DAP epimerase</shortName>
        <ecNumber evidence="1">5.1.1.7</ecNumber>
    </recommendedName>
    <alternativeName>
        <fullName evidence="1">PLP-independent amino acid racemase</fullName>
    </alternativeName>
</protein>
<feature type="chain" id="PRO_1000011907" description="Diaminopimelate epimerase">
    <location>
        <begin position="1"/>
        <end position="289"/>
    </location>
</feature>
<feature type="active site" description="Proton donor" evidence="1">
    <location>
        <position position="87"/>
    </location>
</feature>
<feature type="active site" description="Proton acceptor" evidence="1">
    <location>
        <position position="226"/>
    </location>
</feature>
<feature type="binding site" evidence="1">
    <location>
        <position position="11"/>
    </location>
    <ligand>
        <name>substrate</name>
    </ligand>
</feature>
<feature type="binding site" evidence="1">
    <location>
        <position position="78"/>
    </location>
    <ligand>
        <name>substrate</name>
    </ligand>
</feature>
<feature type="binding site" evidence="1">
    <location>
        <begin position="88"/>
        <end position="89"/>
    </location>
    <ligand>
        <name>substrate</name>
    </ligand>
</feature>
<feature type="binding site" evidence="1">
    <location>
        <position position="163"/>
    </location>
    <ligand>
        <name>substrate</name>
    </ligand>
</feature>
<feature type="binding site" evidence="1">
    <location>
        <position position="199"/>
    </location>
    <ligand>
        <name>substrate</name>
    </ligand>
</feature>
<feature type="binding site" evidence="1">
    <location>
        <begin position="217"/>
        <end position="218"/>
    </location>
    <ligand>
        <name>substrate</name>
    </ligand>
</feature>
<feature type="binding site" evidence="1">
    <location>
        <begin position="227"/>
        <end position="228"/>
    </location>
    <ligand>
        <name>substrate</name>
    </ligand>
</feature>
<feature type="site" description="Could be important to modulate the pK values of the two catalytic cysteine residues" evidence="1">
    <location>
        <position position="165"/>
    </location>
</feature>
<feature type="site" description="Could be important to modulate the pK values of the two catalytic cysteine residues" evidence="1">
    <location>
        <position position="217"/>
    </location>
</feature>
<keyword id="KW-0028">Amino-acid biosynthesis</keyword>
<keyword id="KW-0963">Cytoplasm</keyword>
<keyword id="KW-0413">Isomerase</keyword>
<keyword id="KW-0457">Lysine biosynthesis</keyword>
<proteinExistence type="inferred from homology"/>
<gene>
    <name evidence="1" type="primary">dapF</name>
    <name type="ordered locus">BCG_2739c</name>
</gene>
<reference key="1">
    <citation type="journal article" date="2007" name="Proc. Natl. Acad. Sci. U.S.A.">
        <title>Genome plasticity of BCG and impact on vaccine efficacy.</title>
        <authorList>
            <person name="Brosch R."/>
            <person name="Gordon S.V."/>
            <person name="Garnier T."/>
            <person name="Eiglmeier K."/>
            <person name="Frigui W."/>
            <person name="Valenti P."/>
            <person name="Dos Santos S."/>
            <person name="Duthoy S."/>
            <person name="Lacroix C."/>
            <person name="Garcia-Pelayo C."/>
            <person name="Inwald J.K."/>
            <person name="Golby P."/>
            <person name="Garcia J.N."/>
            <person name="Hewinson R.G."/>
            <person name="Behr M.A."/>
            <person name="Quail M.A."/>
            <person name="Churcher C."/>
            <person name="Barrell B.G."/>
            <person name="Parkhill J."/>
            <person name="Cole S.T."/>
        </authorList>
    </citation>
    <scope>NUCLEOTIDE SEQUENCE [LARGE SCALE GENOMIC DNA]</scope>
    <source>
        <strain>BCG / Pasteur 1173P2</strain>
    </source>
</reference>